<keyword id="KW-0067">ATP-binding</keyword>
<keyword id="KW-0173">Coenzyme A biosynthesis</keyword>
<keyword id="KW-0963">Cytoplasm</keyword>
<keyword id="KW-0460">Magnesium</keyword>
<keyword id="KW-0547">Nucleotide-binding</keyword>
<keyword id="KW-0548">Nucleotidyltransferase</keyword>
<keyword id="KW-1185">Reference proteome</keyword>
<keyword id="KW-0808">Transferase</keyword>
<proteinExistence type="inferred from homology"/>
<accession>Q72BV2</accession>
<protein>
    <recommendedName>
        <fullName evidence="1">Phosphopantetheine adenylyltransferase</fullName>
        <ecNumber evidence="1">2.7.7.3</ecNumber>
    </recommendedName>
    <alternativeName>
        <fullName evidence="1">Dephospho-CoA pyrophosphorylase</fullName>
    </alternativeName>
    <alternativeName>
        <fullName evidence="1">Pantetheine-phosphate adenylyltransferase</fullName>
        <shortName evidence="1">PPAT</shortName>
    </alternativeName>
</protein>
<gene>
    <name evidence="1" type="primary">coaD</name>
    <name type="ordered locus">DVU_1532</name>
</gene>
<organism>
    <name type="scientific">Nitratidesulfovibrio vulgaris (strain ATCC 29579 / DSM 644 / CCUG 34227 / NCIMB 8303 / VKM B-1760 / Hildenborough)</name>
    <name type="common">Desulfovibrio vulgaris</name>
    <dbReference type="NCBI Taxonomy" id="882"/>
    <lineage>
        <taxon>Bacteria</taxon>
        <taxon>Pseudomonadati</taxon>
        <taxon>Thermodesulfobacteriota</taxon>
        <taxon>Desulfovibrionia</taxon>
        <taxon>Desulfovibrionales</taxon>
        <taxon>Desulfovibrionaceae</taxon>
        <taxon>Nitratidesulfovibrio</taxon>
    </lineage>
</organism>
<evidence type="ECO:0000255" key="1">
    <source>
        <dbReference type="HAMAP-Rule" id="MF_00151"/>
    </source>
</evidence>
<feature type="chain" id="PRO_0000156203" description="Phosphopantetheine adenylyltransferase">
    <location>
        <begin position="1"/>
        <end position="186"/>
    </location>
</feature>
<feature type="binding site" evidence="1">
    <location>
        <begin position="14"/>
        <end position="15"/>
    </location>
    <ligand>
        <name>ATP</name>
        <dbReference type="ChEBI" id="CHEBI:30616"/>
    </ligand>
</feature>
<feature type="binding site" evidence="1">
    <location>
        <position position="14"/>
    </location>
    <ligand>
        <name>substrate</name>
    </ligand>
</feature>
<feature type="binding site" evidence="1">
    <location>
        <position position="22"/>
    </location>
    <ligand>
        <name>ATP</name>
        <dbReference type="ChEBI" id="CHEBI:30616"/>
    </ligand>
</feature>
<feature type="binding site" evidence="1">
    <location>
        <position position="46"/>
    </location>
    <ligand>
        <name>substrate</name>
    </ligand>
</feature>
<feature type="binding site" evidence="1">
    <location>
        <position position="78"/>
    </location>
    <ligand>
        <name>substrate</name>
    </ligand>
</feature>
<feature type="binding site" evidence="1">
    <location>
        <position position="92"/>
    </location>
    <ligand>
        <name>substrate</name>
    </ligand>
</feature>
<feature type="binding site" evidence="1">
    <location>
        <begin position="93"/>
        <end position="95"/>
    </location>
    <ligand>
        <name>ATP</name>
        <dbReference type="ChEBI" id="CHEBI:30616"/>
    </ligand>
</feature>
<feature type="binding site" evidence="1">
    <location>
        <position position="103"/>
    </location>
    <ligand>
        <name>ATP</name>
        <dbReference type="ChEBI" id="CHEBI:30616"/>
    </ligand>
</feature>
<feature type="binding site" evidence="1">
    <location>
        <begin position="128"/>
        <end position="134"/>
    </location>
    <ligand>
        <name>ATP</name>
        <dbReference type="ChEBI" id="CHEBI:30616"/>
    </ligand>
</feature>
<feature type="site" description="Transition state stabilizer" evidence="1">
    <location>
        <position position="22"/>
    </location>
</feature>
<dbReference type="EC" id="2.7.7.3" evidence="1"/>
<dbReference type="EMBL" id="AE017285">
    <property type="protein sequence ID" value="AAS96010.1"/>
    <property type="molecule type" value="Genomic_DNA"/>
</dbReference>
<dbReference type="RefSeq" id="WP_010938824.1">
    <property type="nucleotide sequence ID" value="NC_002937.3"/>
</dbReference>
<dbReference type="RefSeq" id="YP_010751.1">
    <property type="nucleotide sequence ID" value="NC_002937.3"/>
</dbReference>
<dbReference type="SMR" id="Q72BV2"/>
<dbReference type="STRING" id="882.DVU_1532"/>
<dbReference type="PaxDb" id="882-DVU_1532"/>
<dbReference type="EnsemblBacteria" id="AAS96010">
    <property type="protein sequence ID" value="AAS96010"/>
    <property type="gene ID" value="DVU_1532"/>
</dbReference>
<dbReference type="KEGG" id="dvu:DVU_1532"/>
<dbReference type="PATRIC" id="fig|882.5.peg.1410"/>
<dbReference type="eggNOG" id="COG0669">
    <property type="taxonomic scope" value="Bacteria"/>
</dbReference>
<dbReference type="HOGENOM" id="CLU_100149_0_1_7"/>
<dbReference type="OrthoDB" id="9806661at2"/>
<dbReference type="PhylomeDB" id="Q72BV2"/>
<dbReference type="UniPathway" id="UPA00241">
    <property type="reaction ID" value="UER00355"/>
</dbReference>
<dbReference type="Proteomes" id="UP000002194">
    <property type="component" value="Chromosome"/>
</dbReference>
<dbReference type="GO" id="GO:0005737">
    <property type="term" value="C:cytoplasm"/>
    <property type="evidence" value="ECO:0007669"/>
    <property type="project" value="UniProtKB-SubCell"/>
</dbReference>
<dbReference type="GO" id="GO:0005524">
    <property type="term" value="F:ATP binding"/>
    <property type="evidence" value="ECO:0007669"/>
    <property type="project" value="UniProtKB-KW"/>
</dbReference>
<dbReference type="GO" id="GO:0004595">
    <property type="term" value="F:pantetheine-phosphate adenylyltransferase activity"/>
    <property type="evidence" value="ECO:0007669"/>
    <property type="project" value="UniProtKB-UniRule"/>
</dbReference>
<dbReference type="GO" id="GO:0015937">
    <property type="term" value="P:coenzyme A biosynthetic process"/>
    <property type="evidence" value="ECO:0007669"/>
    <property type="project" value="UniProtKB-UniRule"/>
</dbReference>
<dbReference type="CDD" id="cd02163">
    <property type="entry name" value="PPAT"/>
    <property type="match status" value="1"/>
</dbReference>
<dbReference type="Gene3D" id="3.40.50.620">
    <property type="entry name" value="HUPs"/>
    <property type="match status" value="1"/>
</dbReference>
<dbReference type="HAMAP" id="MF_00151">
    <property type="entry name" value="PPAT_bact"/>
    <property type="match status" value="1"/>
</dbReference>
<dbReference type="InterPro" id="IPR004821">
    <property type="entry name" value="Cyt_trans-like"/>
</dbReference>
<dbReference type="InterPro" id="IPR001980">
    <property type="entry name" value="PPAT"/>
</dbReference>
<dbReference type="InterPro" id="IPR014729">
    <property type="entry name" value="Rossmann-like_a/b/a_fold"/>
</dbReference>
<dbReference type="NCBIfam" id="TIGR01510">
    <property type="entry name" value="coaD_prev_kdtB"/>
    <property type="match status" value="1"/>
</dbReference>
<dbReference type="NCBIfam" id="TIGR00125">
    <property type="entry name" value="cyt_tran_rel"/>
    <property type="match status" value="1"/>
</dbReference>
<dbReference type="PANTHER" id="PTHR21342">
    <property type="entry name" value="PHOSPHOPANTETHEINE ADENYLYLTRANSFERASE"/>
    <property type="match status" value="1"/>
</dbReference>
<dbReference type="PANTHER" id="PTHR21342:SF1">
    <property type="entry name" value="PHOSPHOPANTETHEINE ADENYLYLTRANSFERASE"/>
    <property type="match status" value="1"/>
</dbReference>
<dbReference type="Pfam" id="PF01467">
    <property type="entry name" value="CTP_transf_like"/>
    <property type="match status" value="1"/>
</dbReference>
<dbReference type="PRINTS" id="PR01020">
    <property type="entry name" value="LPSBIOSNTHSS"/>
</dbReference>
<dbReference type="SUPFAM" id="SSF52374">
    <property type="entry name" value="Nucleotidylyl transferase"/>
    <property type="match status" value="1"/>
</dbReference>
<name>COAD_NITV2</name>
<comment type="function">
    <text evidence="1">Reversibly transfers an adenylyl group from ATP to 4'-phosphopantetheine, yielding dephospho-CoA (dPCoA) and pyrophosphate.</text>
</comment>
<comment type="catalytic activity">
    <reaction evidence="1">
        <text>(R)-4'-phosphopantetheine + ATP + H(+) = 3'-dephospho-CoA + diphosphate</text>
        <dbReference type="Rhea" id="RHEA:19801"/>
        <dbReference type="ChEBI" id="CHEBI:15378"/>
        <dbReference type="ChEBI" id="CHEBI:30616"/>
        <dbReference type="ChEBI" id="CHEBI:33019"/>
        <dbReference type="ChEBI" id="CHEBI:57328"/>
        <dbReference type="ChEBI" id="CHEBI:61723"/>
        <dbReference type="EC" id="2.7.7.3"/>
    </reaction>
</comment>
<comment type="cofactor">
    <cofactor evidence="1">
        <name>Mg(2+)</name>
        <dbReference type="ChEBI" id="CHEBI:18420"/>
    </cofactor>
</comment>
<comment type="pathway">
    <text evidence="1">Cofactor biosynthesis; coenzyme A biosynthesis; CoA from (R)-pantothenate: step 4/5.</text>
</comment>
<comment type="subunit">
    <text evidence="1">Homohexamer.</text>
</comment>
<comment type="subcellular location">
    <subcellularLocation>
        <location evidence="1">Cytoplasm</location>
    </subcellularLocation>
</comment>
<comment type="similarity">
    <text evidence="1">Belongs to the bacterial CoaD family.</text>
</comment>
<reference key="1">
    <citation type="journal article" date="2004" name="Nat. Biotechnol.">
        <title>The genome sequence of the anaerobic, sulfate-reducing bacterium Desulfovibrio vulgaris Hildenborough.</title>
        <authorList>
            <person name="Heidelberg J.F."/>
            <person name="Seshadri R."/>
            <person name="Haveman S.A."/>
            <person name="Hemme C.L."/>
            <person name="Paulsen I.T."/>
            <person name="Kolonay J.F."/>
            <person name="Eisen J.A."/>
            <person name="Ward N.L."/>
            <person name="Methe B.A."/>
            <person name="Brinkac L.M."/>
            <person name="Daugherty S.C."/>
            <person name="DeBoy R.T."/>
            <person name="Dodson R.J."/>
            <person name="Durkin A.S."/>
            <person name="Madupu R."/>
            <person name="Nelson W.C."/>
            <person name="Sullivan S.A."/>
            <person name="Fouts D.E."/>
            <person name="Haft D.H."/>
            <person name="Selengut J."/>
            <person name="Peterson J.D."/>
            <person name="Davidsen T.M."/>
            <person name="Zafar N."/>
            <person name="Zhou L."/>
            <person name="Radune D."/>
            <person name="Dimitrov G."/>
            <person name="Hance M."/>
            <person name="Tran K."/>
            <person name="Khouri H.M."/>
            <person name="Gill J."/>
            <person name="Utterback T.R."/>
            <person name="Feldblyum T.V."/>
            <person name="Wall J.D."/>
            <person name="Voordouw G."/>
            <person name="Fraser C.M."/>
        </authorList>
    </citation>
    <scope>NUCLEOTIDE SEQUENCE [LARGE SCALE GENOMIC DNA]</scope>
    <source>
        <strain>ATCC 29579 / DSM 644 / CCUG 34227 / NCIMB 8303 / VKM B-1760 / Hildenborough</strain>
    </source>
</reference>
<sequence length="186" mass="21068">MDDERGKLAVYPGTFDPLTMGHVSLIRRGRQIFDRVIVAVAMDTPKTPLFSLDERVRMAEEVFADHEGITVEPFSGLLVDYAERRGANVILRGLRAVSDFEYEFQLALMNRKLKRHVQTVFLMTDYQWLYISSTIIKAAASLGGDIKGLVPDNVYRRLREKYGYPYPLNPGLALSTEADEDLPPSL</sequence>